<protein>
    <recommendedName>
        <fullName>Sterol esterase 1</fullName>
        <ecNumber evidence="4">3.1.1.13</ecNumber>
    </recommendedName>
    <alternativeName>
        <fullName>Steryl ester hydrolase 1</fullName>
    </alternativeName>
</protein>
<name>YEH1_YEAST</name>
<organism>
    <name type="scientific">Saccharomyces cerevisiae (strain ATCC 204508 / S288c)</name>
    <name type="common">Baker's yeast</name>
    <dbReference type="NCBI Taxonomy" id="559292"/>
    <lineage>
        <taxon>Eukaryota</taxon>
        <taxon>Fungi</taxon>
        <taxon>Dikarya</taxon>
        <taxon>Ascomycota</taxon>
        <taxon>Saccharomycotina</taxon>
        <taxon>Saccharomycetes</taxon>
        <taxon>Saccharomycetales</taxon>
        <taxon>Saccharomycetaceae</taxon>
        <taxon>Saccharomyces</taxon>
    </lineage>
</organism>
<dbReference type="EC" id="3.1.1.13" evidence="4"/>
<dbReference type="EMBL" id="Z73117">
    <property type="protein sequence ID" value="CAA97456.1"/>
    <property type="molecule type" value="Genomic_DNA"/>
</dbReference>
<dbReference type="EMBL" id="X91488">
    <property type="protein sequence ID" value="CAA62780.1"/>
    <property type="molecule type" value="Genomic_DNA"/>
</dbReference>
<dbReference type="EMBL" id="BK006945">
    <property type="protein sequence ID" value="DAA09306.1"/>
    <property type="molecule type" value="Genomic_DNA"/>
</dbReference>
<dbReference type="PIR" id="S64754">
    <property type="entry name" value="S64754"/>
</dbReference>
<dbReference type="RefSeq" id="NP_013089.1">
    <property type="nucleotide sequence ID" value="NM_001181832.1"/>
</dbReference>
<dbReference type="SMR" id="Q07804"/>
<dbReference type="BioGRID" id="31239">
    <property type="interactions" value="60"/>
</dbReference>
<dbReference type="DIP" id="DIP-4156N"/>
<dbReference type="FunCoup" id="Q07804">
    <property type="interactions" value="82"/>
</dbReference>
<dbReference type="IntAct" id="Q07804">
    <property type="interactions" value="15"/>
</dbReference>
<dbReference type="MINT" id="Q07804"/>
<dbReference type="STRING" id="4932.YLL012W"/>
<dbReference type="ESTHER" id="yeast-YLL012W">
    <property type="family name" value="Acidic_Lipase"/>
</dbReference>
<dbReference type="iPTMnet" id="Q07804"/>
<dbReference type="PaxDb" id="4932-YLL012W"/>
<dbReference type="PeptideAtlas" id="Q07804"/>
<dbReference type="EnsemblFungi" id="YLL012W_mRNA">
    <property type="protein sequence ID" value="YLL012W"/>
    <property type="gene ID" value="YLL012W"/>
</dbReference>
<dbReference type="GeneID" id="850648"/>
<dbReference type="KEGG" id="sce:YLL012W"/>
<dbReference type="AGR" id="SGD:S000003935"/>
<dbReference type="SGD" id="S000003935">
    <property type="gene designation" value="YEH1"/>
</dbReference>
<dbReference type="VEuPathDB" id="FungiDB:YLL012W"/>
<dbReference type="eggNOG" id="KOG2624">
    <property type="taxonomic scope" value="Eukaryota"/>
</dbReference>
<dbReference type="GeneTree" id="ENSGT00940000176565"/>
<dbReference type="HOGENOM" id="CLU_024238_3_1_1"/>
<dbReference type="InParanoid" id="Q07804"/>
<dbReference type="OMA" id="HVSVKLM"/>
<dbReference type="OrthoDB" id="6130531at2759"/>
<dbReference type="BioCyc" id="MetaCyc:G3O-32117-MONOMER"/>
<dbReference type="BioCyc" id="YEAST:G3O-32117-MONOMER"/>
<dbReference type="BRENDA" id="3.1.1.13">
    <property type="organism ID" value="984"/>
</dbReference>
<dbReference type="Reactome" id="R-SCE-192456">
    <property type="pathway name" value="Digestion of dietary lipid"/>
</dbReference>
<dbReference type="Reactome" id="R-SCE-6809371">
    <property type="pathway name" value="Formation of the cornified envelope"/>
</dbReference>
<dbReference type="BioGRID-ORCS" id="850648">
    <property type="hits" value="0 hits in 10 CRISPR screens"/>
</dbReference>
<dbReference type="PRO" id="PR:Q07804"/>
<dbReference type="Proteomes" id="UP000002311">
    <property type="component" value="Chromosome XII"/>
</dbReference>
<dbReference type="RNAct" id="Q07804">
    <property type="molecule type" value="protein"/>
</dbReference>
<dbReference type="GO" id="GO:0005811">
    <property type="term" value="C:lipid droplet"/>
    <property type="evidence" value="ECO:0000314"/>
    <property type="project" value="SGD"/>
</dbReference>
<dbReference type="GO" id="GO:0016020">
    <property type="term" value="C:membrane"/>
    <property type="evidence" value="ECO:0000314"/>
    <property type="project" value="SGD"/>
</dbReference>
<dbReference type="GO" id="GO:0004771">
    <property type="term" value="F:sterol ester esterase activity"/>
    <property type="evidence" value="ECO:0000314"/>
    <property type="project" value="SGD"/>
</dbReference>
<dbReference type="GO" id="GO:0016042">
    <property type="term" value="P:lipid catabolic process"/>
    <property type="evidence" value="ECO:0007669"/>
    <property type="project" value="UniProtKB-KW"/>
</dbReference>
<dbReference type="GO" id="GO:0016125">
    <property type="term" value="P:sterol metabolic process"/>
    <property type="evidence" value="ECO:0000315"/>
    <property type="project" value="SGD"/>
</dbReference>
<dbReference type="FunFam" id="3.40.50.1820:FF:000108">
    <property type="entry name" value="Lipid particle protein"/>
    <property type="match status" value="1"/>
</dbReference>
<dbReference type="Gene3D" id="3.40.50.1820">
    <property type="entry name" value="alpha/beta hydrolase"/>
    <property type="match status" value="1"/>
</dbReference>
<dbReference type="InterPro" id="IPR029058">
    <property type="entry name" value="AB_hydrolase_fold"/>
</dbReference>
<dbReference type="InterPro" id="IPR006693">
    <property type="entry name" value="AB_hydrolase_lipase"/>
</dbReference>
<dbReference type="PANTHER" id="PTHR11005">
    <property type="entry name" value="LYSOSOMAL ACID LIPASE-RELATED"/>
    <property type="match status" value="1"/>
</dbReference>
<dbReference type="Pfam" id="PF04083">
    <property type="entry name" value="Abhydro_lipase"/>
    <property type="match status" value="1"/>
</dbReference>
<dbReference type="SUPFAM" id="SSF53474">
    <property type="entry name" value="alpha/beta-Hydrolases"/>
    <property type="match status" value="1"/>
</dbReference>
<gene>
    <name type="primary">YEH1</name>
    <name type="ordered locus">YLL012W</name>
    <name type="ORF">L1329</name>
</gene>
<reference key="1">
    <citation type="journal article" date="1997" name="Nature">
        <title>The nucleotide sequence of Saccharomyces cerevisiae chromosome XII.</title>
        <authorList>
            <person name="Johnston M."/>
            <person name="Hillier L.W."/>
            <person name="Riles L."/>
            <person name="Albermann K."/>
            <person name="Andre B."/>
            <person name="Ansorge W."/>
            <person name="Benes V."/>
            <person name="Brueckner M."/>
            <person name="Delius H."/>
            <person name="Dubois E."/>
            <person name="Duesterhoeft A."/>
            <person name="Entian K.-D."/>
            <person name="Floeth M."/>
            <person name="Goffeau A."/>
            <person name="Hebling U."/>
            <person name="Heumann K."/>
            <person name="Heuss-Neitzel D."/>
            <person name="Hilbert H."/>
            <person name="Hilger F."/>
            <person name="Kleine K."/>
            <person name="Koetter P."/>
            <person name="Louis E.J."/>
            <person name="Messenguy F."/>
            <person name="Mewes H.-W."/>
            <person name="Miosga T."/>
            <person name="Moestl D."/>
            <person name="Mueller-Auer S."/>
            <person name="Nentwich U."/>
            <person name="Obermaier B."/>
            <person name="Piravandi E."/>
            <person name="Pohl T.M."/>
            <person name="Portetelle D."/>
            <person name="Purnelle B."/>
            <person name="Rechmann S."/>
            <person name="Rieger M."/>
            <person name="Rinke M."/>
            <person name="Rose M."/>
            <person name="Scharfe M."/>
            <person name="Scherens B."/>
            <person name="Scholler P."/>
            <person name="Schwager C."/>
            <person name="Schwarz S."/>
            <person name="Underwood A.P."/>
            <person name="Urrestarazu L.A."/>
            <person name="Vandenbol M."/>
            <person name="Verhasselt P."/>
            <person name="Vierendeels F."/>
            <person name="Voet M."/>
            <person name="Volckaert G."/>
            <person name="Voss H."/>
            <person name="Wambutt R."/>
            <person name="Wedler E."/>
            <person name="Wedler H."/>
            <person name="Zimmermann F.K."/>
            <person name="Zollner A."/>
            <person name="Hani J."/>
            <person name="Hoheisel J.D."/>
        </authorList>
    </citation>
    <scope>NUCLEOTIDE SEQUENCE [LARGE SCALE GENOMIC DNA]</scope>
    <source>
        <strain>ATCC 204508 / S288c</strain>
    </source>
</reference>
<reference key="2">
    <citation type="journal article" date="2014" name="G3 (Bethesda)">
        <title>The reference genome sequence of Saccharomyces cerevisiae: Then and now.</title>
        <authorList>
            <person name="Engel S.R."/>
            <person name="Dietrich F.S."/>
            <person name="Fisk D.G."/>
            <person name="Binkley G."/>
            <person name="Balakrishnan R."/>
            <person name="Costanzo M.C."/>
            <person name="Dwight S.S."/>
            <person name="Hitz B.C."/>
            <person name="Karra K."/>
            <person name="Nash R.S."/>
            <person name="Weng S."/>
            <person name="Wong E.D."/>
            <person name="Lloyd P."/>
            <person name="Skrzypek M.S."/>
            <person name="Miyasato S.R."/>
            <person name="Simison M."/>
            <person name="Cherry J.M."/>
        </authorList>
    </citation>
    <scope>GENOME REANNOTATION</scope>
    <source>
        <strain>ATCC 204508 / S288c</strain>
    </source>
</reference>
<reference key="3">
    <citation type="journal article" date="2003" name="Nature">
        <title>Global analysis of protein expression in yeast.</title>
        <authorList>
            <person name="Ghaemmaghami S."/>
            <person name="Huh W.-K."/>
            <person name="Bower K."/>
            <person name="Howson R.W."/>
            <person name="Belle A."/>
            <person name="Dephoure N."/>
            <person name="O'Shea E.K."/>
            <person name="Weissman J.S."/>
        </authorList>
    </citation>
    <scope>LEVEL OF PROTEIN EXPRESSION [LARGE SCALE ANALYSIS]</scope>
</reference>
<reference key="4">
    <citation type="journal article" date="2003" name="Nature">
        <title>Global analysis of protein localization in budding yeast.</title>
        <authorList>
            <person name="Huh W.-K."/>
            <person name="Falvo J.V."/>
            <person name="Gerke L.C."/>
            <person name="Carroll A.S."/>
            <person name="Howson R.W."/>
            <person name="Weissman J.S."/>
            <person name="O'Shea E.K."/>
        </authorList>
    </citation>
    <scope>SUBCELLULAR LOCATION [LARGE SCALE ANALYSIS]</scope>
</reference>
<reference key="5">
    <citation type="journal article" date="2005" name="Mol. Cell. Biol.">
        <title>The Saccharomyces cerevisiae YLL012/YEH1, YLR020/YEH2, and TGL1 genes encode a novel family of membrane-anchored lipases that are required for steryl ester hydrolysis.</title>
        <authorList>
            <person name="Koeffel R."/>
            <person name="Tiwari R."/>
            <person name="Falquet L."/>
            <person name="Schneiter R."/>
        </authorList>
    </citation>
    <scope>FUNCTION</scope>
    <scope>SUBCELLULAR LOCATION</scope>
    <scope>LACK OF GLYCOSYLATION</scope>
    <scope>MEMBRANE TOPOLOGY</scope>
    <scope>CATALYTIC ACTIVITY</scope>
</reference>
<reference key="6">
    <citation type="journal article" date="2006" name="Eukaryot. Cell">
        <title>Yeh1 constitutes the major steryl ester hydrolase under heme-deficient conditions in Saccharomyces cerevisiae.</title>
        <authorList>
            <person name="Koeffel R."/>
            <person name="Schneiter R."/>
        </authorList>
    </citation>
    <scope>FUNCTION</scope>
    <scope>INDUCTION</scope>
</reference>
<sequence>MGVSAVLKRARNLLATFIVCCFMAVVLVLALAHHFINEHRDTRSSSTQIEVDDESKRNVHHDHVLTRTNAYATPYLDLEHDKKNGIVYDHTRTVVRKKNHEVGSSSLHKNLFHKFLTKLIFRFIEKEKVTEGVTQGKFNNSSNEIANHEPVFEKIPVQCDNPLQNLILSEDLTLVADLNYYFNQYNIQIEEFRLETEDGFVIDLWHLIPKYRTTDSDKKKRPPILMLHGLLQSSGSFASNGRKSLAYFLYQSGYDIWLGNNRCGFRPEWNEAKVPTLASRWDWDLREMVKYDLTLLIDTVLAKTQFEKLTLISHSQGTTQGFMGLVNEDKFFPPGSGSKESFFTSKIANYIALAPAVYPGPLLNEKLFVKLMTKEIENPWFFGETSFFEIMMIVRNLCVGESLFSFVCYTIFNYLFDWNDTLWDTALRDRHFLFSPVHVSVKLMQWWLSPDPNKVSFKFGSHKMFPDNVKWFSDASKAPNIYLFVPKQDRLVDGERLINHFVNVESNVNYKIWYIDEYAHIDVLWAHDVIERIGKPILQNLNNYYSKKPSSAFESDCSDTEVETELEMVAEKA</sequence>
<comment type="function">
    <text evidence="4 5">Mediates the hydrolysis of steryl esters, thereby playing a central role in lipid metabolism. Under heme-deficient conditions, it constitutes the major steryl ester hydrolase, suggesting that it plays a central role in mobilization of steryl esters under anaerobic conditions.</text>
</comment>
<comment type="catalytic activity">
    <reaction evidence="4">
        <text>a sterol ester + H2O = a sterol + a fatty acid + H(+)</text>
        <dbReference type="Rhea" id="RHEA:10100"/>
        <dbReference type="ChEBI" id="CHEBI:15377"/>
        <dbReference type="ChEBI" id="CHEBI:15378"/>
        <dbReference type="ChEBI" id="CHEBI:15889"/>
        <dbReference type="ChEBI" id="CHEBI:28868"/>
        <dbReference type="ChEBI" id="CHEBI:35915"/>
        <dbReference type="EC" id="3.1.1.13"/>
    </reaction>
</comment>
<comment type="subcellular location">
    <subcellularLocation>
        <location>Lipid droplet</location>
    </subcellularLocation>
    <subcellularLocation>
        <location>Membrane</location>
        <topology>Peripheral membrane protein</topology>
    </subcellularLocation>
</comment>
<comment type="induction">
    <text evidence="5">Under heme-deficiency conditions. Heme-deficient induction requires ROX3.</text>
</comment>
<comment type="PTM">
    <text>Not N-glycosylated.</text>
</comment>
<comment type="miscellaneous">
    <text evidence="3">Present with 7770 molecules/cell in log phase SD medium.</text>
</comment>
<comment type="similarity">
    <text evidence="6">Belongs to the AB hydrolase superfamily.</text>
</comment>
<proteinExistence type="evidence at protein level"/>
<accession>Q07804</accession>
<accession>D6VXZ0</accession>
<evidence type="ECO:0000250" key="1"/>
<evidence type="ECO:0000255" key="2"/>
<evidence type="ECO:0000269" key="3">
    <source>
    </source>
</evidence>
<evidence type="ECO:0000269" key="4">
    <source>
    </source>
</evidence>
<evidence type="ECO:0000269" key="5">
    <source>
    </source>
</evidence>
<evidence type="ECO:0000305" key="6"/>
<keyword id="KW-0378">Hydrolase</keyword>
<keyword id="KW-0442">Lipid degradation</keyword>
<keyword id="KW-0551">Lipid droplet</keyword>
<keyword id="KW-0443">Lipid metabolism</keyword>
<keyword id="KW-0472">Membrane</keyword>
<keyword id="KW-1185">Reference proteome</keyword>
<feature type="chain" id="PRO_0000248404" description="Sterol esterase 1">
    <location>
        <begin position="1"/>
        <end position="573"/>
    </location>
</feature>
<feature type="topological domain" description="Cytoplasmic" evidence="4">
    <location>
        <begin position="1"/>
        <end position="12"/>
    </location>
</feature>
<feature type="intramembrane region" evidence="2">
    <location>
        <begin position="13"/>
        <end position="33"/>
    </location>
</feature>
<feature type="topological domain" description="Cytoplasmic" evidence="4">
    <location>
        <begin position="34"/>
        <end position="573"/>
    </location>
</feature>
<feature type="active site" description="Nucleophile" evidence="1">
    <location>
        <position position="315"/>
    </location>
</feature>
<feature type="active site" description="Charge relay system" evidence="1">
    <location>
        <position position="489"/>
    </location>
</feature>
<feature type="active site" description="Charge relay system" evidence="1">
    <location>
        <position position="520"/>
    </location>
</feature>